<comment type="function">
    <text>Catalyzes the hydroxylation of alpha-terpineol.</text>
</comment>
<comment type="cofactor">
    <cofactor>
        <name>heme</name>
        <dbReference type="ChEBI" id="CHEBI:30413"/>
    </cofactor>
</comment>
<comment type="subcellular location">
    <subcellularLocation>
        <location evidence="1">Cytoplasm</location>
    </subcellularLocation>
</comment>
<comment type="similarity">
    <text evidence="2">Belongs to the cytochrome P450 family.</text>
</comment>
<reference key="1">
    <citation type="journal article" date="1992" name="J. Biol. Chem.">
        <title>Cytochrome P-450terp. Isolation and purification of the protein and cloning and sequencing of its operon.</title>
        <authorList>
            <person name="Peterson J.A."/>
            <person name="Lu J.-Y."/>
            <person name="Geisselsoder J."/>
            <person name="Graham-Lorence S."/>
            <person name="Carmona C."/>
            <person name="Witney F."/>
            <person name="Lorence M.C."/>
        </authorList>
    </citation>
    <scope>NUCLEOTIDE SEQUENCE [GENOMIC DNA]</scope>
    <scope>PARTIAL PROTEIN SEQUENCE</scope>
</reference>
<reference key="2">
    <citation type="journal article" date="1994" name="J. Mol. Biol.">
        <title>Crystal structure and refinement of cytochrome P450terp at 2.3-A resolution.</title>
        <authorList>
            <person name="Hasemann C.A."/>
            <person name="Ravichandran K.G."/>
            <person name="Peterson J.A."/>
            <person name="Deisenhifer J."/>
        </authorList>
    </citation>
    <scope>X-RAY CRYSTALLOGRAPHY (2.3 ANGSTROMS)</scope>
</reference>
<keyword id="KW-0002">3D-structure</keyword>
<keyword id="KW-0963">Cytoplasm</keyword>
<keyword id="KW-0903">Direct protein sequencing</keyword>
<keyword id="KW-0349">Heme</keyword>
<keyword id="KW-0408">Iron</keyword>
<keyword id="KW-0479">Metal-binding</keyword>
<keyword id="KW-0503">Monooxygenase</keyword>
<keyword id="KW-0560">Oxidoreductase</keyword>
<evidence type="ECO:0000250" key="1"/>
<evidence type="ECO:0000305" key="2"/>
<evidence type="ECO:0007829" key="3">
    <source>
        <dbReference type="PDB" id="1CPT"/>
    </source>
</evidence>
<evidence type="ECO:0007829" key="4">
    <source>
        <dbReference type="PDB" id="8EUK"/>
    </source>
</evidence>
<evidence type="ECO:0007829" key="5">
    <source>
        <dbReference type="PDB" id="8EUL"/>
    </source>
</evidence>
<organism>
    <name type="scientific">Pseudomonas sp</name>
    <dbReference type="NCBI Taxonomy" id="306"/>
    <lineage>
        <taxon>Bacteria</taxon>
        <taxon>Pseudomonadati</taxon>
        <taxon>Pseudomonadota</taxon>
        <taxon>Gammaproteobacteria</taxon>
        <taxon>Pseudomonadales</taxon>
        <taxon>Pseudomonadaceae</taxon>
        <taxon>Pseudomonas</taxon>
    </lineage>
</organism>
<name>CPXL_PSESP</name>
<feature type="chain" id="PRO_0000052222" description="Cytochrome P450-terp">
    <location>
        <begin position="1"/>
        <end position="428"/>
    </location>
</feature>
<feature type="binding site" description="axial binding residue">
    <location>
        <position position="377"/>
    </location>
    <ligand>
        <name>heme</name>
        <dbReference type="ChEBI" id="CHEBI:30413"/>
    </ligand>
    <ligandPart>
        <name>Fe</name>
        <dbReference type="ChEBI" id="CHEBI:18248"/>
    </ligandPart>
</feature>
<feature type="helix" evidence="4">
    <location>
        <begin position="9"/>
        <end position="16"/>
    </location>
</feature>
<feature type="helix" evidence="4">
    <location>
        <begin position="19"/>
        <end position="22"/>
    </location>
</feature>
<feature type="helix" evidence="4">
    <location>
        <begin position="24"/>
        <end position="37"/>
    </location>
</feature>
<feature type="strand" evidence="4">
    <location>
        <begin position="39"/>
        <end position="43"/>
    </location>
</feature>
<feature type="strand" evidence="4">
    <location>
        <begin position="51"/>
        <end position="54"/>
    </location>
</feature>
<feature type="helix" evidence="4">
    <location>
        <begin position="57"/>
        <end position="64"/>
    </location>
</feature>
<feature type="turn" evidence="4">
    <location>
        <begin position="67"/>
        <end position="69"/>
    </location>
</feature>
<feature type="strand" evidence="4">
    <location>
        <begin position="70"/>
        <end position="75"/>
    </location>
</feature>
<feature type="helix" evidence="4">
    <location>
        <begin position="82"/>
        <end position="90"/>
    </location>
</feature>
<feature type="turn" evidence="4">
    <location>
        <begin position="91"/>
        <end position="94"/>
    </location>
</feature>
<feature type="helix" evidence="4">
    <location>
        <begin position="102"/>
        <end position="104"/>
    </location>
</feature>
<feature type="helix" evidence="4">
    <location>
        <begin position="109"/>
        <end position="115"/>
    </location>
</feature>
<feature type="turn" evidence="4">
    <location>
        <begin position="116"/>
        <end position="118"/>
    </location>
</feature>
<feature type="helix" evidence="4">
    <location>
        <begin position="119"/>
        <end position="121"/>
    </location>
</feature>
<feature type="helix" evidence="4">
    <location>
        <begin position="123"/>
        <end position="126"/>
    </location>
</feature>
<feature type="helix" evidence="4">
    <location>
        <begin position="127"/>
        <end position="129"/>
    </location>
</feature>
<feature type="helix" evidence="4">
    <location>
        <begin position="130"/>
        <end position="145"/>
    </location>
</feature>
<feature type="strand" evidence="4">
    <location>
        <begin position="147"/>
        <end position="152"/>
    </location>
</feature>
<feature type="helix" evidence="4">
    <location>
        <begin position="154"/>
        <end position="158"/>
    </location>
</feature>
<feature type="helix" evidence="4">
    <location>
        <begin position="161"/>
        <end position="170"/>
    </location>
</feature>
<feature type="helix" evidence="4">
    <location>
        <begin position="174"/>
        <end position="176"/>
    </location>
</feature>
<feature type="helix" evidence="4">
    <location>
        <begin position="177"/>
        <end position="185"/>
    </location>
</feature>
<feature type="turn" evidence="4">
    <location>
        <begin position="186"/>
        <end position="188"/>
    </location>
</feature>
<feature type="helix" evidence="4">
    <location>
        <begin position="205"/>
        <end position="232"/>
    </location>
</feature>
<feature type="helix" evidence="4">
    <location>
        <begin position="238"/>
        <end position="243"/>
    </location>
</feature>
<feature type="strand" evidence="3">
    <location>
        <begin position="246"/>
        <end position="251"/>
    </location>
</feature>
<feature type="helix" evidence="4">
    <location>
        <begin position="254"/>
        <end position="285"/>
    </location>
</feature>
<feature type="helix" evidence="4">
    <location>
        <begin position="287"/>
        <end position="295"/>
    </location>
</feature>
<feature type="helix" evidence="4">
    <location>
        <begin position="297"/>
        <end position="299"/>
    </location>
</feature>
<feature type="helix" evidence="4">
    <location>
        <begin position="300"/>
        <end position="311"/>
    </location>
</feature>
<feature type="strand" evidence="4">
    <location>
        <begin position="317"/>
        <end position="323"/>
    </location>
</feature>
<feature type="strand" evidence="4">
    <location>
        <begin position="325"/>
        <end position="327"/>
    </location>
</feature>
<feature type="strand" evidence="4">
    <location>
        <begin position="330"/>
        <end position="332"/>
    </location>
</feature>
<feature type="strand" evidence="4">
    <location>
        <begin position="337"/>
        <end position="340"/>
    </location>
</feature>
<feature type="helix" evidence="4">
    <location>
        <begin position="342"/>
        <end position="345"/>
    </location>
</feature>
<feature type="turn" evidence="4">
    <location>
        <begin position="349"/>
        <end position="351"/>
    </location>
</feature>
<feature type="helix" evidence="4">
    <location>
        <begin position="380"/>
        <end position="394"/>
    </location>
</feature>
<feature type="helix" evidence="4">
    <location>
        <begin position="395"/>
        <end position="397"/>
    </location>
</feature>
<feature type="strand" evidence="4">
    <location>
        <begin position="398"/>
        <end position="405"/>
    </location>
</feature>
<feature type="strand" evidence="5">
    <location>
        <begin position="408"/>
        <end position="410"/>
    </location>
</feature>
<feature type="strand" evidence="4">
    <location>
        <begin position="413"/>
        <end position="415"/>
    </location>
</feature>
<feature type="strand" evidence="4">
    <location>
        <begin position="417"/>
        <end position="420"/>
    </location>
</feature>
<feature type="strand" evidence="4">
    <location>
        <begin position="422"/>
        <end position="427"/>
    </location>
</feature>
<accession>P33006</accession>
<protein>
    <recommendedName>
        <fullName>Cytochrome P450-terp</fullName>
        <shortName>Cytochrome P450terp</shortName>
        <ecNumber>1.14.-.-</ecNumber>
    </recommendedName>
    <alternativeName>
        <fullName>Cytochrome P450 108</fullName>
    </alternativeName>
</protein>
<proteinExistence type="evidence at protein level"/>
<gene>
    <name type="primary">cyp108</name>
    <name type="synonym">terPC</name>
</gene>
<sequence>MDARATIPEHIARTVILPQGYADDEVIYPAFKWLRDEQPLAMAHIEGYDPMWIATKHADVMQIGKQPGLFSNAEGSEILYDQNNEAFMRSISGGCPHVIDSLTSMDPPTHTAYRGLTLNWFQPASIRKLEENIRRIAQASVQRLLDFDGECDFMTDCALYYPLHVVMTALGVPEDDEPLMLKLTQDFFGVHEPDEQAVAAPRQSADEAARRFHETIATFYDYFNGFTVDRRSCPKDDVMSLLANSKLDGNYIDDKYINAYYVAIATAGHDTTSSSSGGAIIGLSRNPEQLALAKSDPALIPRLVDEAVRWTAPVKSFMRTALADTEVRGQNIKRGDRIMLSYPSANRDEEVFSNPDEFDITRFPNRHLGFGWGAHMCLGQHLAKLEMKIFFEELLPKLKSVELSGPPRLVATNFVGGPKNVPIRFTKA</sequence>
<dbReference type="EC" id="1.14.-.-"/>
<dbReference type="EMBL" id="M91440">
    <property type="protein sequence ID" value="AAA25996.1"/>
    <property type="molecule type" value="Genomic_DNA"/>
</dbReference>
<dbReference type="PIR" id="A42971">
    <property type="entry name" value="A42971"/>
</dbReference>
<dbReference type="PDB" id="1CPT">
    <property type="method" value="X-ray"/>
    <property type="resolution" value="2.30 A"/>
    <property type="chains" value="A=1-428"/>
</dbReference>
<dbReference type="PDB" id="8EUH">
    <property type="method" value="X-ray"/>
    <property type="resolution" value="2.00 A"/>
    <property type="chains" value="A=1-428"/>
</dbReference>
<dbReference type="PDB" id="8EUK">
    <property type="method" value="X-ray"/>
    <property type="resolution" value="1.98 A"/>
    <property type="chains" value="A=1-428"/>
</dbReference>
<dbReference type="PDB" id="8EUL">
    <property type="method" value="X-ray"/>
    <property type="resolution" value="2.24 A"/>
    <property type="chains" value="A=1-428"/>
</dbReference>
<dbReference type="PDBsum" id="1CPT"/>
<dbReference type="PDBsum" id="8EUH"/>
<dbReference type="PDBsum" id="8EUK"/>
<dbReference type="PDBsum" id="8EUL"/>
<dbReference type="SMR" id="P33006"/>
<dbReference type="KEGG" id="ag:AAA25996"/>
<dbReference type="EvolutionaryTrace" id="P33006"/>
<dbReference type="GO" id="GO:0005737">
    <property type="term" value="C:cytoplasm"/>
    <property type="evidence" value="ECO:0007669"/>
    <property type="project" value="UniProtKB-SubCell"/>
</dbReference>
<dbReference type="GO" id="GO:0020037">
    <property type="term" value="F:heme binding"/>
    <property type="evidence" value="ECO:0007669"/>
    <property type="project" value="InterPro"/>
</dbReference>
<dbReference type="GO" id="GO:0005506">
    <property type="term" value="F:iron ion binding"/>
    <property type="evidence" value="ECO:0007669"/>
    <property type="project" value="InterPro"/>
</dbReference>
<dbReference type="GO" id="GO:0004497">
    <property type="term" value="F:monooxygenase activity"/>
    <property type="evidence" value="ECO:0007669"/>
    <property type="project" value="UniProtKB-KW"/>
</dbReference>
<dbReference type="GO" id="GO:0016705">
    <property type="term" value="F:oxidoreductase activity, acting on paired donors, with incorporation or reduction of molecular oxygen"/>
    <property type="evidence" value="ECO:0007669"/>
    <property type="project" value="InterPro"/>
</dbReference>
<dbReference type="CDD" id="cd11033">
    <property type="entry name" value="CYP142-like"/>
    <property type="match status" value="1"/>
</dbReference>
<dbReference type="FunFam" id="1.10.630.10:FF:000018">
    <property type="entry name" value="Cytochrome P450 monooxygenase"/>
    <property type="match status" value="1"/>
</dbReference>
<dbReference type="Gene3D" id="1.10.630.10">
    <property type="entry name" value="Cytochrome P450"/>
    <property type="match status" value="1"/>
</dbReference>
<dbReference type="InterPro" id="IPR001128">
    <property type="entry name" value="Cyt_P450"/>
</dbReference>
<dbReference type="InterPro" id="IPR002397">
    <property type="entry name" value="Cyt_P450_B"/>
</dbReference>
<dbReference type="InterPro" id="IPR017972">
    <property type="entry name" value="Cyt_P450_CS"/>
</dbReference>
<dbReference type="InterPro" id="IPR036396">
    <property type="entry name" value="Cyt_P450_sf"/>
</dbReference>
<dbReference type="PANTHER" id="PTHR46696:SF1">
    <property type="entry name" value="CYTOCHROME P450 YJIB-RELATED"/>
    <property type="match status" value="1"/>
</dbReference>
<dbReference type="PANTHER" id="PTHR46696">
    <property type="entry name" value="P450, PUTATIVE (EUROFUNG)-RELATED"/>
    <property type="match status" value="1"/>
</dbReference>
<dbReference type="Pfam" id="PF00067">
    <property type="entry name" value="p450"/>
    <property type="match status" value="1"/>
</dbReference>
<dbReference type="PRINTS" id="PR00359">
    <property type="entry name" value="BP450"/>
</dbReference>
<dbReference type="SUPFAM" id="SSF48264">
    <property type="entry name" value="Cytochrome P450"/>
    <property type="match status" value="1"/>
</dbReference>
<dbReference type="PROSITE" id="PS00086">
    <property type="entry name" value="CYTOCHROME_P450"/>
    <property type="match status" value="1"/>
</dbReference>